<organism>
    <name type="scientific">Escherichia coli (strain K12)</name>
    <dbReference type="NCBI Taxonomy" id="83333"/>
    <lineage>
        <taxon>Bacteria</taxon>
        <taxon>Pseudomonadati</taxon>
        <taxon>Pseudomonadota</taxon>
        <taxon>Gammaproteobacteria</taxon>
        <taxon>Enterobacterales</taxon>
        <taxon>Enterobacteriaceae</taxon>
        <taxon>Escherichia</taxon>
    </lineage>
</organism>
<name>RPNA_ECOLI</name>
<keyword id="KW-0002">3D-structure</keyword>
<keyword id="KW-0233">DNA recombination</keyword>
<keyword id="KW-0255">Endonuclease</keyword>
<keyword id="KW-0378">Hydrolase</keyword>
<keyword id="KW-0460">Magnesium</keyword>
<keyword id="KW-0540">Nuclease</keyword>
<keyword id="KW-1185">Reference proteome</keyword>
<reference key="1">
    <citation type="journal article" date="1989" name="Nucleic Acids Res.">
        <title>Nucleotide sequence of the bioH gene of Escherichia coli.</title>
        <authorList>
            <person name="O'Regan M."/>
            <person name="Gloeckler R."/>
            <person name="Bernard S."/>
            <person name="Ledoux C."/>
            <person name="Ohsawa I."/>
            <person name="Lemoine Y."/>
        </authorList>
    </citation>
    <scope>NUCLEOTIDE SEQUENCE [GENOMIC DNA]</scope>
    <source>
        <strain>K12</strain>
    </source>
</reference>
<reference key="2">
    <citation type="journal article" date="1997" name="Science">
        <title>The complete genome sequence of Escherichia coli K-12.</title>
        <authorList>
            <person name="Blattner F.R."/>
            <person name="Plunkett G. III"/>
            <person name="Bloch C.A."/>
            <person name="Perna N.T."/>
            <person name="Burland V."/>
            <person name="Riley M."/>
            <person name="Collado-Vides J."/>
            <person name="Glasner J.D."/>
            <person name="Rode C.K."/>
            <person name="Mayhew G.F."/>
            <person name="Gregor J."/>
            <person name="Davis N.W."/>
            <person name="Kirkpatrick H.A."/>
            <person name="Goeden M.A."/>
            <person name="Rose D.J."/>
            <person name="Mau B."/>
            <person name="Shao Y."/>
        </authorList>
    </citation>
    <scope>NUCLEOTIDE SEQUENCE [LARGE SCALE GENOMIC DNA]</scope>
    <source>
        <strain>K12 / MG1655 / ATCC 47076</strain>
    </source>
</reference>
<reference key="3">
    <citation type="journal article" date="2006" name="Mol. Syst. Biol.">
        <title>Highly accurate genome sequences of Escherichia coli K-12 strains MG1655 and W3110.</title>
        <authorList>
            <person name="Hayashi K."/>
            <person name="Morooka N."/>
            <person name="Yamamoto Y."/>
            <person name="Fujita K."/>
            <person name="Isono K."/>
            <person name="Choi S."/>
            <person name="Ohtsubo E."/>
            <person name="Baba T."/>
            <person name="Wanner B.L."/>
            <person name="Mori H."/>
            <person name="Horiuchi T."/>
        </authorList>
    </citation>
    <scope>NUCLEOTIDE SEQUENCE [LARGE SCALE GENOMIC DNA]</scope>
    <source>
        <strain>K12 / W3110 / ATCC 27325 / DSM 5911</strain>
    </source>
</reference>
<reference key="4">
    <citation type="journal article" date="2015" name="Bioinformatics">
        <title>Novel function discovery with GeneMANIA: a new integrated resource for gene function prediction in Escherichia coli.</title>
        <authorList>
            <person name="Vlasblom J."/>
            <person name="Zuberi K."/>
            <person name="Rodriguez H."/>
            <person name="Arnold R."/>
            <person name="Gagarinova A."/>
            <person name="Deineko V."/>
            <person name="Kumar A."/>
            <person name="Leung E."/>
            <person name="Rizzolo K."/>
            <person name="Samanfar B."/>
            <person name="Chang L."/>
            <person name="Phanse S."/>
            <person name="Golshani A."/>
            <person name="Greenblatt J.F."/>
            <person name="Houry W.A."/>
            <person name="Emili A."/>
            <person name="Morris Q."/>
            <person name="Bader G."/>
            <person name="Babu M."/>
        </authorList>
    </citation>
    <scope>DISRUPTION PHENOTYPE</scope>
    <source>
        <strain>K12 / BW25113</strain>
    </source>
</reference>
<reference key="5">
    <citation type="journal article" date="2017" name="J. Bacteriol.">
        <title>The Rpn (YhgA-like) proteins of Escherichia coli K-12 and their contribution to RecA-independent horizontal transfer.</title>
        <authorList>
            <person name="Kingston A.W."/>
            <person name="Ponkratz C."/>
            <person name="Raleigh E.A."/>
        </authorList>
    </citation>
    <scope>FUNCTION</scope>
    <scope>COFACTOR</scope>
    <scope>ACTIVITY REGULATION</scope>
    <scope>BIOPHYSICOCHEMICAL PROPERTIES</scope>
    <scope>DISRUPTION PHENOTYPE</scope>
    <scope>MUTAGENESIS OF ASP-11; ASP-63; GLU-82; GLN-84; ARG-94 AND ASP-165</scope>
    <source>
        <strain>K12</strain>
    </source>
</reference>
<feature type="chain" id="PRO_0000169544" description="Recombination-promoting nuclease RpnA">
    <location>
        <begin position="1"/>
        <end position="292"/>
    </location>
</feature>
<feature type="mutagenesis site" description="No longer increases recombination efficiency, toxicity or SOS response." evidence="2">
    <original>D</original>
    <variation>A</variation>
    <location>
        <position position="11"/>
    </location>
</feature>
<feature type="mutagenesis site" description="No longer increases recombination efficiency, toxicity or SOS response. No nuclease activity." evidence="2">
    <original>D</original>
    <variation>A</variation>
    <location>
        <position position="63"/>
    </location>
</feature>
<feature type="mutagenesis site" description="No longer increases recombination efficiency, toxicity or SOS response." evidence="2">
    <original>E</original>
    <variation>A</variation>
    <location>
        <position position="82"/>
    </location>
</feature>
<feature type="mutagenesis site" description="No longer increases recombination efficiency or SOS response, more toxic than wild-type." evidence="2">
    <original>Q</original>
    <variation>A</variation>
    <location>
        <position position="84"/>
    </location>
</feature>
<feature type="mutagenesis site" description="No longer increases recombination efficiency, toxicity or SOS response." evidence="2">
    <original>Q</original>
    <variation>K</variation>
    <location>
        <position position="84"/>
    </location>
</feature>
<feature type="mutagenesis site" description="No longer increases recombination efficiency or SOS response, more toxic than wild-type." evidence="2">
    <original>R</original>
    <variation>A</variation>
    <location>
        <position position="94"/>
    </location>
</feature>
<feature type="mutagenesis site" description="Hyperactive mutant, increases recombination efficiency, more toxic than wild-type. Increased nuclease activity." evidence="2">
    <original>D</original>
    <variation>A</variation>
    <location>
        <position position="165"/>
    </location>
</feature>
<feature type="helix" evidence="5">
    <location>
        <begin position="246"/>
        <end position="268"/>
    </location>
</feature>
<feature type="helix" evidence="5">
    <location>
        <begin position="273"/>
        <end position="280"/>
    </location>
</feature>
<feature type="helix" evidence="5">
    <location>
        <begin position="284"/>
        <end position="288"/>
    </location>
</feature>
<gene>
    <name evidence="3" type="primary">rpnA</name>
    <name type="synonym">yhgA</name>
    <name type="ordered locus">b3411</name>
    <name type="ordered locus">JW3374</name>
</gene>
<comment type="function">
    <text evidence="2">A low activity DNA endonuclease yielding 3'-hydroxyl ends, equally active on ss or dsDNA, not active on dsRNA (PubMed:28096446). Shows no sequence specificity (PubMed:28096446). Upon expression enhances RecA-independent DNA recombination 49-fold, concomitantly reducing viability by 88% and probably inducing DNA damage as measured by induction of the SOS repair response in RecA cells (PubMed:28096446). RecA-independent DNA recombination leads to replacement of recipient genes with large segments of donor DNA rather than DNA addition to the donor strain; increased expression of RpnA leads to smaller replacement segments, suggesting this protein may play a role in generating crossover events (PubMed:28096446).</text>
</comment>
<comment type="cofactor">
    <cofactor evidence="2">
        <name>Mg(2+)</name>
        <dbReference type="ChEBI" id="CHEBI:18420"/>
    </cofactor>
    <text evidence="2">Endonuclease activity partially supported by Mn(2+).</text>
</comment>
<comment type="activity regulation">
    <text evidence="2">Inhibited by EDTA, Zn(2+) and by Mg(2+) plus Mn(2+); stimulated by Ca(2+) in the presence of Mg(2+).</text>
</comment>
<comment type="biophysicochemical properties">
    <phDependence>
        <text evidence="2">Optimum pH is 9.0, active between pH 7.5 and 10.5.</text>
    </phDependence>
</comment>
<comment type="disruption phenotype">
    <text evidence="1 2">Cells grow to slightly higher density than wild-type in sublethal levels of streptomycin (PubMed:25316676). A quadruple rpnA-rpnB-rpnC-rpnD deletion shows no change in basal RecA-independent recombination (PubMed:28096446).</text>
</comment>
<comment type="similarity">
    <text evidence="4">Belongs to the Rpn/YhgA-like nuclease family.</text>
</comment>
<sequence>MSKKQSSTPHDALFKLFLRQPDTARDFLAFHLPAPIHALCDMKTLKLESSSFIDDDLRESYSDVLWSVKTEQGPGYIYCLIEHQSTSNKLIAFRMMRYAIAAMQNHLDAGYKTLPMVVPLLFYHGIESPYPYSLCWLDCFADPKLARQLYASAFPLIDVTVMPDDEIMQHRRMALLELIQKHIRQRDLMGLVEQMACLLSSGYANDRQIKGLFNYILQTGDAVRFNDFIDGVAERSPKHKESLMTIAERLRQEGEQSKALHIAKIMLESGVPLADIMRFTGLSEEELAAASQ</sequence>
<accession>P31667</accession>
<accession>Q2M776</accession>
<evidence type="ECO:0000269" key="1">
    <source>
    </source>
</evidence>
<evidence type="ECO:0000269" key="2">
    <source>
    </source>
</evidence>
<evidence type="ECO:0000303" key="3">
    <source>
    </source>
</evidence>
<evidence type="ECO:0000305" key="4"/>
<evidence type="ECO:0007829" key="5">
    <source>
        <dbReference type="PDB" id="7TH0"/>
    </source>
</evidence>
<protein>
    <recommendedName>
        <fullName evidence="3">Recombination-promoting nuclease RpnA</fullName>
        <ecNumber evidence="2">3.1.21.-</ecNumber>
    </recommendedName>
</protein>
<proteinExistence type="evidence at protein level"/>
<dbReference type="EC" id="3.1.21.-" evidence="2"/>
<dbReference type="EMBL" id="X15587">
    <property type="status" value="NOT_ANNOTATED_CDS"/>
    <property type="molecule type" value="Genomic_DNA"/>
</dbReference>
<dbReference type="EMBL" id="U18997">
    <property type="protein sequence ID" value="AAA58209.1"/>
    <property type="molecule type" value="Genomic_DNA"/>
</dbReference>
<dbReference type="EMBL" id="U00096">
    <property type="protein sequence ID" value="AAC76436.1"/>
    <property type="molecule type" value="Genomic_DNA"/>
</dbReference>
<dbReference type="EMBL" id="AP009048">
    <property type="protein sequence ID" value="BAE77880.1"/>
    <property type="molecule type" value="Genomic_DNA"/>
</dbReference>
<dbReference type="PIR" id="F65136">
    <property type="entry name" value="F65136"/>
</dbReference>
<dbReference type="RefSeq" id="NP_417870.1">
    <property type="nucleotide sequence ID" value="NC_000913.3"/>
</dbReference>
<dbReference type="RefSeq" id="WP_000039062.1">
    <property type="nucleotide sequence ID" value="NZ_SSZK01000008.1"/>
</dbReference>
<dbReference type="PDB" id="7TH0">
    <property type="method" value="X-ray"/>
    <property type="resolution" value="1.90 A"/>
    <property type="chains" value="A=244-292"/>
</dbReference>
<dbReference type="PDBsum" id="7TH0"/>
<dbReference type="SMR" id="P31667"/>
<dbReference type="BioGRID" id="4263493">
    <property type="interactions" value="9"/>
</dbReference>
<dbReference type="DIP" id="DIP-12335N"/>
<dbReference type="FunCoup" id="P31667">
    <property type="interactions" value="98"/>
</dbReference>
<dbReference type="IntAct" id="P31667">
    <property type="interactions" value="1"/>
</dbReference>
<dbReference type="STRING" id="511145.b3411"/>
<dbReference type="PaxDb" id="511145-b3411"/>
<dbReference type="EnsemblBacteria" id="AAC76436">
    <property type="protein sequence ID" value="AAC76436"/>
    <property type="gene ID" value="b3411"/>
</dbReference>
<dbReference type="GeneID" id="947917"/>
<dbReference type="KEGG" id="ecj:JW3374"/>
<dbReference type="KEGG" id="eco:b3411"/>
<dbReference type="KEGG" id="ecoc:C3026_18505"/>
<dbReference type="PATRIC" id="fig|1411691.4.peg.3318"/>
<dbReference type="EchoBASE" id="EB1700"/>
<dbReference type="eggNOG" id="COG5464">
    <property type="taxonomic scope" value="Bacteria"/>
</dbReference>
<dbReference type="HOGENOM" id="CLU_059548_1_0_6"/>
<dbReference type="InParanoid" id="P31667"/>
<dbReference type="OMA" id="VPQHRES"/>
<dbReference type="OrthoDB" id="6532193at2"/>
<dbReference type="PhylomeDB" id="P31667"/>
<dbReference type="BioCyc" id="EcoCyc:EG11750-MONOMER"/>
<dbReference type="BioCyc" id="MetaCyc:EG11750-MONOMER"/>
<dbReference type="PRO" id="PR:P31667"/>
<dbReference type="Proteomes" id="UP000000625">
    <property type="component" value="Chromosome"/>
</dbReference>
<dbReference type="GO" id="GO:1990238">
    <property type="term" value="F:double-stranded DNA endonuclease activity"/>
    <property type="evidence" value="ECO:0000314"/>
    <property type="project" value="EcoCyc"/>
</dbReference>
<dbReference type="GO" id="GO:0016888">
    <property type="term" value="F:endodeoxyribonuclease activity, producing 5'-phosphomonoesters"/>
    <property type="evidence" value="ECO:0000314"/>
    <property type="project" value="UniProtKB"/>
</dbReference>
<dbReference type="GO" id="GO:0006310">
    <property type="term" value="P:DNA recombination"/>
    <property type="evidence" value="ECO:0000314"/>
    <property type="project" value="UniProtKB"/>
</dbReference>
<dbReference type="InterPro" id="IPR051699">
    <property type="entry name" value="Rpn/YhgA-like_nuclease"/>
</dbReference>
<dbReference type="InterPro" id="IPR010106">
    <property type="entry name" value="RpnA"/>
</dbReference>
<dbReference type="InterPro" id="IPR006842">
    <property type="entry name" value="Transposase_31"/>
</dbReference>
<dbReference type="NCBIfam" id="NF007361">
    <property type="entry name" value="PRK09857.1"/>
    <property type="match status" value="1"/>
</dbReference>
<dbReference type="NCBIfam" id="TIGR01784">
    <property type="entry name" value="T_den_put_tspse"/>
    <property type="match status" value="1"/>
</dbReference>
<dbReference type="PANTHER" id="PTHR34611">
    <property type="match status" value="1"/>
</dbReference>
<dbReference type="PANTHER" id="PTHR34611:SF2">
    <property type="entry name" value="INACTIVE RECOMBINATION-PROMOTING NUCLEASE-LIKE PROTEIN RPNE-RELATED"/>
    <property type="match status" value="1"/>
</dbReference>
<dbReference type="Pfam" id="PF04754">
    <property type="entry name" value="Transposase_31"/>
    <property type="match status" value="1"/>
</dbReference>